<dbReference type="EC" id="4.1.3.27"/>
<dbReference type="EMBL" id="CU329672">
    <property type="protein sequence ID" value="CAA21443.1"/>
    <property type="molecule type" value="Genomic_DNA"/>
</dbReference>
<dbReference type="EMBL" id="D89256">
    <property type="protein sequence ID" value="BAA13917.1"/>
    <property type="molecule type" value="mRNA"/>
</dbReference>
<dbReference type="PIR" id="T40974">
    <property type="entry name" value="T40974"/>
</dbReference>
<dbReference type="PIR" id="T43181">
    <property type="entry name" value="T43181"/>
</dbReference>
<dbReference type="RefSeq" id="NP_588323.1">
    <property type="nucleotide sequence ID" value="NM_001023314.2"/>
</dbReference>
<dbReference type="SMR" id="O94582"/>
<dbReference type="BioGRID" id="275423">
    <property type="interactions" value="4"/>
</dbReference>
<dbReference type="FunCoup" id="O94582">
    <property type="interactions" value="149"/>
</dbReference>
<dbReference type="STRING" id="284812.O94582"/>
<dbReference type="iPTMnet" id="O94582"/>
<dbReference type="PaxDb" id="4896-SPCC1442.09.1"/>
<dbReference type="EnsemblFungi" id="SPCC1442.09.1">
    <property type="protein sequence ID" value="SPCC1442.09.1:pep"/>
    <property type="gene ID" value="SPCC1442.09"/>
</dbReference>
<dbReference type="GeneID" id="2538842"/>
<dbReference type="KEGG" id="spo:2538842"/>
<dbReference type="PomBase" id="SPCC1442.09">
    <property type="gene designation" value="trp3"/>
</dbReference>
<dbReference type="VEuPathDB" id="FungiDB:SPCC1442.09"/>
<dbReference type="eggNOG" id="KOG1223">
    <property type="taxonomic scope" value="Eukaryota"/>
</dbReference>
<dbReference type="HOGENOM" id="CLU_006493_9_3_1"/>
<dbReference type="InParanoid" id="O94582"/>
<dbReference type="OMA" id="GCVGYLD"/>
<dbReference type="PhylomeDB" id="O94582"/>
<dbReference type="UniPathway" id="UPA00035">
    <property type="reaction ID" value="UER00040"/>
</dbReference>
<dbReference type="PRO" id="PR:O94582"/>
<dbReference type="Proteomes" id="UP000002485">
    <property type="component" value="Chromosome III"/>
</dbReference>
<dbReference type="GO" id="GO:0005950">
    <property type="term" value="C:anthranilate synthase complex"/>
    <property type="evidence" value="ECO:0000266"/>
    <property type="project" value="PomBase"/>
</dbReference>
<dbReference type="GO" id="GO:0005829">
    <property type="term" value="C:cytosol"/>
    <property type="evidence" value="ECO:0007005"/>
    <property type="project" value="PomBase"/>
</dbReference>
<dbReference type="GO" id="GO:0005634">
    <property type="term" value="C:nucleus"/>
    <property type="evidence" value="ECO:0007005"/>
    <property type="project" value="PomBase"/>
</dbReference>
<dbReference type="GO" id="GO:0004049">
    <property type="term" value="F:anthranilate synthase activity"/>
    <property type="evidence" value="ECO:0000266"/>
    <property type="project" value="PomBase"/>
</dbReference>
<dbReference type="GO" id="GO:0046872">
    <property type="term" value="F:metal ion binding"/>
    <property type="evidence" value="ECO:0007669"/>
    <property type="project" value="UniProtKB-KW"/>
</dbReference>
<dbReference type="GO" id="GO:0000162">
    <property type="term" value="P:L-tryptophan biosynthetic process"/>
    <property type="evidence" value="ECO:0000269"/>
    <property type="project" value="PomBase"/>
</dbReference>
<dbReference type="Gene3D" id="3.60.120.10">
    <property type="entry name" value="Anthranilate synthase"/>
    <property type="match status" value="1"/>
</dbReference>
<dbReference type="InterPro" id="IPR005801">
    <property type="entry name" value="ADC_synthase"/>
</dbReference>
<dbReference type="InterPro" id="IPR019999">
    <property type="entry name" value="Anth_synth_I-like"/>
</dbReference>
<dbReference type="InterPro" id="IPR006805">
    <property type="entry name" value="Anth_synth_I_N"/>
</dbReference>
<dbReference type="InterPro" id="IPR005256">
    <property type="entry name" value="Anth_synth_I_PabB"/>
</dbReference>
<dbReference type="InterPro" id="IPR015890">
    <property type="entry name" value="Chorismate_C"/>
</dbReference>
<dbReference type="NCBIfam" id="TIGR00564">
    <property type="entry name" value="trpE_most"/>
    <property type="match status" value="1"/>
</dbReference>
<dbReference type="PANTHER" id="PTHR11236">
    <property type="entry name" value="AMINOBENZOATE/ANTHRANILATE SYNTHASE"/>
    <property type="match status" value="1"/>
</dbReference>
<dbReference type="PANTHER" id="PTHR11236:SF9">
    <property type="entry name" value="ANTHRANILATE SYNTHASE COMPONENT 1"/>
    <property type="match status" value="1"/>
</dbReference>
<dbReference type="Pfam" id="PF04715">
    <property type="entry name" value="Anth_synt_I_N"/>
    <property type="match status" value="1"/>
</dbReference>
<dbReference type="Pfam" id="PF00425">
    <property type="entry name" value="Chorismate_bind"/>
    <property type="match status" value="1"/>
</dbReference>
<dbReference type="PRINTS" id="PR00095">
    <property type="entry name" value="ANTSNTHASEI"/>
</dbReference>
<dbReference type="SUPFAM" id="SSF56322">
    <property type="entry name" value="ADC synthase"/>
    <property type="match status" value="1"/>
</dbReference>
<name>TRPE_SCHPO</name>
<protein>
    <recommendedName>
        <fullName>Probable anthranilate synthase component 1</fullName>
        <ecNumber>4.1.3.27</ecNumber>
    </recommendedName>
    <alternativeName>
        <fullName>Anthranilate synthase component I</fullName>
    </alternativeName>
</protein>
<keyword id="KW-0028">Amino-acid biosynthesis</keyword>
<keyword id="KW-0057">Aromatic amino acid biosynthesis</keyword>
<keyword id="KW-0456">Lyase</keyword>
<keyword id="KW-0460">Magnesium</keyword>
<keyword id="KW-0479">Metal-binding</keyword>
<keyword id="KW-0597">Phosphoprotein</keyword>
<keyword id="KW-1185">Reference proteome</keyword>
<keyword id="KW-0822">Tryptophan biosynthesis</keyword>
<gene>
    <name type="primary">trp3</name>
    <name type="ORF">SPCC1442.09</name>
</gene>
<sequence length="489" mass="54960">MKIYPDLKQVQELAEKHKANKIPIYGVIPADMLTPSVAYLKLNQGKKYSFILESVTQGESVSRYSFIGSPYRILMANGKTDPLARLERELKEVKTAPVEGLPSFSGGAVGYVSYDCIKYFEPTTEMPLEDTLGLPEAMFFMTDDLVAFDHAYQTVKIISHVCIQQGRPIEEAYEAAVFKINMLKKKLESPEIPLPEQKKVHLGYEAKSNVGEDGYKAFVSNLKEHIFNGDIFQAVPSQRIARRTDLHPFNLYRHLRTVNPSPYMFYIHCDDFDIIGASPELLVKSEHGRIINHPIAGTVPRGKTKEEDEAYAKDLLASVKDRAEHVMLVDLARNDVSRVCDLDTTSVDKLMTIEKFSHVQHLVSQVSGVLRPDKTRFDAFRSIFPAGTVSGSPKVRAIQLVYGLEKEKRGIYAGAVGRWGYEDDNMDTCIAIRTMVYKDGTVYLQAGGGIVFDSDEQDEYVETLNKLRSNVTAIEETEKLYAEEENSSA</sequence>
<accession>O94582</accession>
<accession>P78905</accession>
<reference key="1">
    <citation type="journal article" date="2002" name="Nature">
        <title>The genome sequence of Schizosaccharomyces pombe.</title>
        <authorList>
            <person name="Wood V."/>
            <person name="Gwilliam R."/>
            <person name="Rajandream M.A."/>
            <person name="Lyne M.H."/>
            <person name="Lyne R."/>
            <person name="Stewart A."/>
            <person name="Sgouros J.G."/>
            <person name="Peat N."/>
            <person name="Hayles J."/>
            <person name="Baker S.G."/>
            <person name="Basham D."/>
            <person name="Bowman S."/>
            <person name="Brooks K."/>
            <person name="Brown D."/>
            <person name="Brown S."/>
            <person name="Chillingworth T."/>
            <person name="Churcher C.M."/>
            <person name="Collins M."/>
            <person name="Connor R."/>
            <person name="Cronin A."/>
            <person name="Davis P."/>
            <person name="Feltwell T."/>
            <person name="Fraser A."/>
            <person name="Gentles S."/>
            <person name="Goble A."/>
            <person name="Hamlin N."/>
            <person name="Harris D.E."/>
            <person name="Hidalgo J."/>
            <person name="Hodgson G."/>
            <person name="Holroyd S."/>
            <person name="Hornsby T."/>
            <person name="Howarth S."/>
            <person name="Huckle E.J."/>
            <person name="Hunt S."/>
            <person name="Jagels K."/>
            <person name="James K.D."/>
            <person name="Jones L."/>
            <person name="Jones M."/>
            <person name="Leather S."/>
            <person name="McDonald S."/>
            <person name="McLean J."/>
            <person name="Mooney P."/>
            <person name="Moule S."/>
            <person name="Mungall K.L."/>
            <person name="Murphy L.D."/>
            <person name="Niblett D."/>
            <person name="Odell C."/>
            <person name="Oliver K."/>
            <person name="O'Neil S."/>
            <person name="Pearson D."/>
            <person name="Quail M.A."/>
            <person name="Rabbinowitsch E."/>
            <person name="Rutherford K.M."/>
            <person name="Rutter S."/>
            <person name="Saunders D."/>
            <person name="Seeger K."/>
            <person name="Sharp S."/>
            <person name="Skelton J."/>
            <person name="Simmonds M.N."/>
            <person name="Squares R."/>
            <person name="Squares S."/>
            <person name="Stevens K."/>
            <person name="Taylor K."/>
            <person name="Taylor R.G."/>
            <person name="Tivey A."/>
            <person name="Walsh S.V."/>
            <person name="Warren T."/>
            <person name="Whitehead S."/>
            <person name="Woodward J.R."/>
            <person name="Volckaert G."/>
            <person name="Aert R."/>
            <person name="Robben J."/>
            <person name="Grymonprez B."/>
            <person name="Weltjens I."/>
            <person name="Vanstreels E."/>
            <person name="Rieger M."/>
            <person name="Schaefer M."/>
            <person name="Mueller-Auer S."/>
            <person name="Gabel C."/>
            <person name="Fuchs M."/>
            <person name="Duesterhoeft A."/>
            <person name="Fritzc C."/>
            <person name="Holzer E."/>
            <person name="Moestl D."/>
            <person name="Hilbert H."/>
            <person name="Borzym K."/>
            <person name="Langer I."/>
            <person name="Beck A."/>
            <person name="Lehrach H."/>
            <person name="Reinhardt R."/>
            <person name="Pohl T.M."/>
            <person name="Eger P."/>
            <person name="Zimmermann W."/>
            <person name="Wedler H."/>
            <person name="Wambutt R."/>
            <person name="Purnelle B."/>
            <person name="Goffeau A."/>
            <person name="Cadieu E."/>
            <person name="Dreano S."/>
            <person name="Gloux S."/>
            <person name="Lelaure V."/>
            <person name="Mottier S."/>
            <person name="Galibert F."/>
            <person name="Aves S.J."/>
            <person name="Xiang Z."/>
            <person name="Hunt C."/>
            <person name="Moore K."/>
            <person name="Hurst S.M."/>
            <person name="Lucas M."/>
            <person name="Rochet M."/>
            <person name="Gaillardin C."/>
            <person name="Tallada V.A."/>
            <person name="Garzon A."/>
            <person name="Thode G."/>
            <person name="Daga R.R."/>
            <person name="Cruzado L."/>
            <person name="Jimenez J."/>
            <person name="Sanchez M."/>
            <person name="del Rey F."/>
            <person name="Benito J."/>
            <person name="Dominguez A."/>
            <person name="Revuelta J.L."/>
            <person name="Moreno S."/>
            <person name="Armstrong J."/>
            <person name="Forsburg S.L."/>
            <person name="Cerutti L."/>
            <person name="Lowe T."/>
            <person name="McCombie W.R."/>
            <person name="Paulsen I."/>
            <person name="Potashkin J."/>
            <person name="Shpakovski G.V."/>
            <person name="Ussery D."/>
            <person name="Barrell B.G."/>
            <person name="Nurse P."/>
        </authorList>
    </citation>
    <scope>NUCLEOTIDE SEQUENCE [LARGE SCALE GENOMIC DNA]</scope>
    <source>
        <strain>972 / ATCC 24843</strain>
    </source>
</reference>
<reference key="2">
    <citation type="journal article" date="1997" name="DNA Res.">
        <title>Identification of open reading frames in Schizosaccharomyces pombe cDNAs.</title>
        <authorList>
            <person name="Yoshioka S."/>
            <person name="Kato K."/>
            <person name="Nakai K."/>
            <person name="Okayama H."/>
            <person name="Nojima H."/>
        </authorList>
    </citation>
    <scope>NUCLEOTIDE SEQUENCE [LARGE SCALE MRNA] OF 126-489</scope>
    <source>
        <strain>PR745</strain>
    </source>
</reference>
<reference key="3">
    <citation type="journal article" date="2008" name="J. Proteome Res.">
        <title>Phosphoproteome analysis of fission yeast.</title>
        <authorList>
            <person name="Wilson-Grady J.T."/>
            <person name="Villen J."/>
            <person name="Gygi S.P."/>
        </authorList>
    </citation>
    <scope>PHOSPHORYLATION [LARGE SCALE ANALYSIS] AT SER-390; SER-392 AND SER-488</scope>
    <scope>IDENTIFICATION BY MASS SPECTROMETRY</scope>
</reference>
<evidence type="ECO:0000250" key="1"/>
<evidence type="ECO:0000250" key="2">
    <source>
        <dbReference type="UniProtKB" id="P00897"/>
    </source>
</evidence>
<evidence type="ECO:0000269" key="3">
    <source>
    </source>
</evidence>
<evidence type="ECO:0000305" key="4"/>
<proteinExistence type="evidence at protein level"/>
<organism>
    <name type="scientific">Schizosaccharomyces pombe (strain 972 / ATCC 24843)</name>
    <name type="common">Fission yeast</name>
    <dbReference type="NCBI Taxonomy" id="284812"/>
    <lineage>
        <taxon>Eukaryota</taxon>
        <taxon>Fungi</taxon>
        <taxon>Dikarya</taxon>
        <taxon>Ascomycota</taxon>
        <taxon>Taphrinomycotina</taxon>
        <taxon>Schizosaccharomycetes</taxon>
        <taxon>Schizosaccharomycetales</taxon>
        <taxon>Schizosaccharomycetaceae</taxon>
        <taxon>Schizosaccharomyces</taxon>
    </lineage>
</organism>
<comment type="catalytic activity">
    <reaction>
        <text>chorismate + L-glutamine = anthranilate + pyruvate + L-glutamate + H(+)</text>
        <dbReference type="Rhea" id="RHEA:21732"/>
        <dbReference type="ChEBI" id="CHEBI:15361"/>
        <dbReference type="ChEBI" id="CHEBI:15378"/>
        <dbReference type="ChEBI" id="CHEBI:16567"/>
        <dbReference type="ChEBI" id="CHEBI:29748"/>
        <dbReference type="ChEBI" id="CHEBI:29985"/>
        <dbReference type="ChEBI" id="CHEBI:58359"/>
        <dbReference type="EC" id="4.1.3.27"/>
    </reaction>
</comment>
<comment type="cofactor">
    <cofactor evidence="2">
        <name>Mg(2+)</name>
        <dbReference type="ChEBI" id="CHEBI:18420"/>
    </cofactor>
    <text evidence="2">Binds 1 Mg(2+) ion per subunit.</text>
</comment>
<comment type="pathway">
    <text>Amino-acid biosynthesis; L-tryptophan biosynthesis; L-tryptophan from chorismate: step 1/5.</text>
</comment>
<comment type="subunit">
    <text evidence="1">Tetramer of two components I and two components II.</text>
</comment>
<comment type="miscellaneous">
    <text>Component I catalyzes the formation of anthranilate using ammonia rather than glutamine, whereas component II provides glutamine amidotransferase activity.</text>
</comment>
<comment type="similarity">
    <text evidence="4">Belongs to the anthranilate synthase component I family.</text>
</comment>
<feature type="chain" id="PRO_0000154133" description="Probable anthranilate synthase component 1">
    <location>
        <begin position="1"/>
        <end position="489"/>
    </location>
</feature>
<feature type="binding site" evidence="2">
    <location>
        <position position="54"/>
    </location>
    <ligand>
        <name>L-tryptophan</name>
        <dbReference type="ChEBI" id="CHEBI:57912"/>
    </ligand>
</feature>
<feature type="binding site" evidence="2">
    <location>
        <begin position="262"/>
        <end position="264"/>
    </location>
    <ligand>
        <name>L-tryptophan</name>
        <dbReference type="ChEBI" id="CHEBI:57912"/>
    </ligand>
</feature>
<feature type="binding site" evidence="2">
    <location>
        <begin position="297"/>
        <end position="298"/>
    </location>
    <ligand>
        <name>chorismate</name>
        <dbReference type="ChEBI" id="CHEBI:29748"/>
    </ligand>
</feature>
<feature type="binding site" evidence="2">
    <location>
        <position position="324"/>
    </location>
    <ligand>
        <name>Mg(2+)</name>
        <dbReference type="ChEBI" id="CHEBI:18420"/>
    </ligand>
</feature>
<feature type="binding site" evidence="2">
    <location>
        <position position="412"/>
    </location>
    <ligand>
        <name>chorismate</name>
        <dbReference type="ChEBI" id="CHEBI:29748"/>
    </ligand>
</feature>
<feature type="binding site" evidence="2">
    <location>
        <position position="433"/>
    </location>
    <ligand>
        <name>chorismate</name>
        <dbReference type="ChEBI" id="CHEBI:29748"/>
    </ligand>
</feature>
<feature type="binding site" evidence="2">
    <location>
        <begin position="447"/>
        <end position="449"/>
    </location>
    <ligand>
        <name>chorismate</name>
        <dbReference type="ChEBI" id="CHEBI:29748"/>
    </ligand>
</feature>
<feature type="binding site" evidence="2">
    <location>
        <position position="449"/>
    </location>
    <ligand>
        <name>chorismate</name>
        <dbReference type="ChEBI" id="CHEBI:29748"/>
    </ligand>
</feature>
<feature type="binding site" evidence="2">
    <location>
        <position position="462"/>
    </location>
    <ligand>
        <name>Mg(2+)</name>
        <dbReference type="ChEBI" id="CHEBI:18420"/>
    </ligand>
</feature>
<feature type="modified residue" description="Phosphoserine" evidence="3">
    <location>
        <position position="390"/>
    </location>
</feature>
<feature type="modified residue" description="Phosphoserine" evidence="3">
    <location>
        <position position="392"/>
    </location>
</feature>
<feature type="modified residue" description="Phosphoserine" evidence="3">
    <location>
        <position position="488"/>
    </location>
</feature>
<feature type="sequence conflict" description="In Ref. 2; BAA13917." evidence="4" ref="2">
    <original>D</original>
    <variation>N</variation>
    <location>
        <position position="144"/>
    </location>
</feature>
<feature type="sequence conflict" description="In Ref. 2; BAA13917." evidence="4" ref="2">
    <original>K</original>
    <variation>Q</variation>
    <location>
        <position position="156"/>
    </location>
</feature>
<feature type="sequence conflict" description="In Ref. 2; BAA13917." evidence="4" ref="2">
    <original>Y</original>
    <variation>F</variation>
    <location>
        <position position="263"/>
    </location>
</feature>
<feature type="sequence conflict" description="In Ref. 2; BAA13917." evidence="4" ref="2">
    <original>K</original>
    <variation>E</variation>
    <location>
        <position position="305"/>
    </location>
</feature>
<feature type="sequence conflict" description="In Ref. 2; BAA13917." evidence="4" ref="2">
    <original>K</original>
    <variation>Q</variation>
    <location>
        <position position="320"/>
    </location>
</feature>
<feature type="sequence conflict" description="In Ref. 2; BAA13917." evidence="4" ref="2">
    <original>M</original>
    <variation>R</variation>
    <location>
        <position position="351"/>
    </location>
</feature>
<feature type="sequence conflict" description="In Ref. 2; BAA13917." evidence="4" ref="2">
    <original>Y</original>
    <variation>N</variation>
    <location>
        <position position="402"/>
    </location>
</feature>
<feature type="sequence conflict" description="In Ref. 2; BAA13917." evidence="4" ref="2">
    <original>I</original>
    <variation>R</variation>
    <location>
        <position position="411"/>
    </location>
</feature>